<dbReference type="EC" id="3.2.1.25"/>
<dbReference type="EMBL" id="DQ490488">
    <property type="protein sequence ID" value="ABF50864.1"/>
    <property type="molecule type" value="mRNA"/>
</dbReference>
<dbReference type="EMBL" id="AACD01000055">
    <property type="protein sequence ID" value="EAA63336.1"/>
    <property type="status" value="ALT_SEQ"/>
    <property type="molecule type" value="Genomic_DNA"/>
</dbReference>
<dbReference type="EMBL" id="BN001306">
    <property type="protein sequence ID" value="CBF82847.1"/>
    <property type="status" value="ALT_SEQ"/>
    <property type="molecule type" value="Genomic_DNA"/>
</dbReference>
<dbReference type="RefSeq" id="XP_660972.1">
    <property type="nucleotide sequence ID" value="XM_655880.1"/>
</dbReference>
<dbReference type="SMR" id="Q5B7W2"/>
<dbReference type="STRING" id="227321.Q5B7W2"/>
<dbReference type="CAZy" id="GH2">
    <property type="family name" value="Glycoside Hydrolase Family 2"/>
</dbReference>
<dbReference type="KEGG" id="ani:ANIA_03368"/>
<dbReference type="eggNOG" id="KOG2230">
    <property type="taxonomic scope" value="Eukaryota"/>
</dbReference>
<dbReference type="HOGENOM" id="CLU_005015_1_0_1"/>
<dbReference type="InParanoid" id="Q5B7W2"/>
<dbReference type="OrthoDB" id="2866996at2759"/>
<dbReference type="UniPathway" id="UPA00280"/>
<dbReference type="Proteomes" id="UP000000560">
    <property type="component" value="Chromosome VI"/>
</dbReference>
<dbReference type="GO" id="GO:0004567">
    <property type="term" value="F:beta-mannosidase activity"/>
    <property type="evidence" value="ECO:0000314"/>
    <property type="project" value="UniProtKB"/>
</dbReference>
<dbReference type="GO" id="GO:0006516">
    <property type="term" value="P:glycoprotein catabolic process"/>
    <property type="evidence" value="ECO:0000318"/>
    <property type="project" value="GO_Central"/>
</dbReference>
<dbReference type="GO" id="GO:0046355">
    <property type="term" value="P:mannan catabolic process"/>
    <property type="evidence" value="ECO:0000314"/>
    <property type="project" value="UniProtKB"/>
</dbReference>
<dbReference type="FunFam" id="2.60.120.260:FF:000118">
    <property type="entry name" value="Beta-mannosidase B"/>
    <property type="match status" value="1"/>
</dbReference>
<dbReference type="FunFam" id="3.20.20.80:FF:000050">
    <property type="entry name" value="Beta-mannosidase B"/>
    <property type="match status" value="1"/>
</dbReference>
<dbReference type="FunFam" id="2.60.40.10:FF:001725">
    <property type="entry name" value="Exo-beta-D-glucosaminidase"/>
    <property type="match status" value="1"/>
</dbReference>
<dbReference type="Gene3D" id="2.60.120.260">
    <property type="entry name" value="Galactose-binding domain-like"/>
    <property type="match status" value="1"/>
</dbReference>
<dbReference type="Gene3D" id="3.20.20.80">
    <property type="entry name" value="Glycosidases"/>
    <property type="match status" value="1"/>
</dbReference>
<dbReference type="Gene3D" id="2.60.40.10">
    <property type="entry name" value="Immunoglobulins"/>
    <property type="match status" value="1"/>
</dbReference>
<dbReference type="InterPro" id="IPR036156">
    <property type="entry name" value="Beta-gal/glucu_dom_sf"/>
</dbReference>
<dbReference type="InterPro" id="IPR054593">
    <property type="entry name" value="Beta-mannosidase-like_N2"/>
</dbReference>
<dbReference type="InterPro" id="IPR050887">
    <property type="entry name" value="Beta-mannosidase_GH2"/>
</dbReference>
<dbReference type="InterPro" id="IPR008979">
    <property type="entry name" value="Galactose-bd-like_sf"/>
</dbReference>
<dbReference type="InterPro" id="IPR006102">
    <property type="entry name" value="Glyco_hydro_2_Ig-like"/>
</dbReference>
<dbReference type="InterPro" id="IPR017853">
    <property type="entry name" value="Glycoside_hydrolase_SF"/>
</dbReference>
<dbReference type="InterPro" id="IPR013783">
    <property type="entry name" value="Ig-like_fold"/>
</dbReference>
<dbReference type="InterPro" id="IPR041447">
    <property type="entry name" value="Mannosidase_ig"/>
</dbReference>
<dbReference type="PANTHER" id="PTHR43730">
    <property type="entry name" value="BETA-MANNOSIDASE"/>
    <property type="match status" value="1"/>
</dbReference>
<dbReference type="PANTHER" id="PTHR43730:SF1">
    <property type="entry name" value="BETA-MANNOSIDASE"/>
    <property type="match status" value="1"/>
</dbReference>
<dbReference type="Pfam" id="PF00703">
    <property type="entry name" value="Glyco_hydro_2"/>
    <property type="match status" value="1"/>
</dbReference>
<dbReference type="Pfam" id="PF22666">
    <property type="entry name" value="Glyco_hydro_2_N2"/>
    <property type="match status" value="1"/>
</dbReference>
<dbReference type="Pfam" id="PF17786">
    <property type="entry name" value="Mannosidase_ig"/>
    <property type="match status" value="1"/>
</dbReference>
<dbReference type="SUPFAM" id="SSF51445">
    <property type="entry name" value="(Trans)glycosidases"/>
    <property type="match status" value="1"/>
</dbReference>
<dbReference type="SUPFAM" id="SSF49303">
    <property type="entry name" value="beta-Galactosidase/glucuronidase domain"/>
    <property type="match status" value="2"/>
</dbReference>
<dbReference type="SUPFAM" id="SSF49785">
    <property type="entry name" value="Galactose-binding domain-like"/>
    <property type="match status" value="1"/>
</dbReference>
<reference key="1">
    <citation type="journal article" date="2006" name="Proc. Natl. Acad. Sci. U.S.A.">
        <title>Development and application of a suite of polysaccharide-degrading enzymes for analyzing plant cell walls.</title>
        <authorList>
            <person name="Bauer S."/>
            <person name="Vasu P."/>
            <person name="Persson S."/>
            <person name="Mort A.J."/>
            <person name="Somerville C.R."/>
        </authorList>
    </citation>
    <scope>NUCLEOTIDE SEQUENCE [MRNA]</scope>
    <scope>FUNCTION</scope>
    <source>
        <strain>FGSC A4 / ATCC 38163 / CBS 112.46 / NRRL 194 / M139</strain>
    </source>
</reference>
<reference key="2">
    <citation type="journal article" date="2005" name="Nature">
        <title>Sequencing of Aspergillus nidulans and comparative analysis with A. fumigatus and A. oryzae.</title>
        <authorList>
            <person name="Galagan J.E."/>
            <person name="Calvo S.E."/>
            <person name="Cuomo C."/>
            <person name="Ma L.-J."/>
            <person name="Wortman J.R."/>
            <person name="Batzoglou S."/>
            <person name="Lee S.-I."/>
            <person name="Bastuerkmen M."/>
            <person name="Spevak C.C."/>
            <person name="Clutterbuck J."/>
            <person name="Kapitonov V."/>
            <person name="Jurka J."/>
            <person name="Scazzocchio C."/>
            <person name="Farman M.L."/>
            <person name="Butler J."/>
            <person name="Purcell S."/>
            <person name="Harris S."/>
            <person name="Braus G.H."/>
            <person name="Draht O."/>
            <person name="Busch S."/>
            <person name="D'Enfert C."/>
            <person name="Bouchier C."/>
            <person name="Goldman G.H."/>
            <person name="Bell-Pedersen D."/>
            <person name="Griffiths-Jones S."/>
            <person name="Doonan J.H."/>
            <person name="Yu J."/>
            <person name="Vienken K."/>
            <person name="Pain A."/>
            <person name="Freitag M."/>
            <person name="Selker E.U."/>
            <person name="Archer D.B."/>
            <person name="Penalva M.A."/>
            <person name="Oakley B.R."/>
            <person name="Momany M."/>
            <person name="Tanaka T."/>
            <person name="Kumagai T."/>
            <person name="Asai K."/>
            <person name="Machida M."/>
            <person name="Nierman W.C."/>
            <person name="Denning D.W."/>
            <person name="Caddick M.X."/>
            <person name="Hynes M."/>
            <person name="Paoletti M."/>
            <person name="Fischer R."/>
            <person name="Miller B.L."/>
            <person name="Dyer P.S."/>
            <person name="Sachs M.S."/>
            <person name="Osmani S.A."/>
            <person name="Birren B.W."/>
        </authorList>
    </citation>
    <scope>NUCLEOTIDE SEQUENCE [LARGE SCALE GENOMIC DNA]</scope>
    <source>
        <strain>FGSC A4 / ATCC 38163 / CBS 112.46 / NRRL 194 / M139</strain>
    </source>
</reference>
<reference key="3">
    <citation type="journal article" date="2009" name="Fungal Genet. Biol.">
        <title>The 2008 update of the Aspergillus nidulans genome annotation: a community effort.</title>
        <authorList>
            <person name="Wortman J.R."/>
            <person name="Gilsenan J.M."/>
            <person name="Joardar V."/>
            <person name="Deegan J."/>
            <person name="Clutterbuck J."/>
            <person name="Andersen M.R."/>
            <person name="Archer D."/>
            <person name="Bencina M."/>
            <person name="Braus G."/>
            <person name="Coutinho P."/>
            <person name="von Dohren H."/>
            <person name="Doonan J."/>
            <person name="Driessen A.J."/>
            <person name="Durek P."/>
            <person name="Espeso E."/>
            <person name="Fekete E."/>
            <person name="Flipphi M."/>
            <person name="Estrada C.G."/>
            <person name="Geysens S."/>
            <person name="Goldman G."/>
            <person name="de Groot P.W."/>
            <person name="Hansen K."/>
            <person name="Harris S.D."/>
            <person name="Heinekamp T."/>
            <person name="Helmstaedt K."/>
            <person name="Henrissat B."/>
            <person name="Hofmann G."/>
            <person name="Homan T."/>
            <person name="Horio T."/>
            <person name="Horiuchi H."/>
            <person name="James S."/>
            <person name="Jones M."/>
            <person name="Karaffa L."/>
            <person name="Karanyi Z."/>
            <person name="Kato M."/>
            <person name="Keller N."/>
            <person name="Kelly D.E."/>
            <person name="Kiel J.A."/>
            <person name="Kim J.M."/>
            <person name="van der Klei I.J."/>
            <person name="Klis F.M."/>
            <person name="Kovalchuk A."/>
            <person name="Krasevec N."/>
            <person name="Kubicek C.P."/>
            <person name="Liu B."/>
            <person name="Maccabe A."/>
            <person name="Meyer V."/>
            <person name="Mirabito P."/>
            <person name="Miskei M."/>
            <person name="Mos M."/>
            <person name="Mullins J."/>
            <person name="Nelson D.R."/>
            <person name="Nielsen J."/>
            <person name="Oakley B.R."/>
            <person name="Osmani S.A."/>
            <person name="Pakula T."/>
            <person name="Paszewski A."/>
            <person name="Paulsen I."/>
            <person name="Pilsyk S."/>
            <person name="Pocsi I."/>
            <person name="Punt P.J."/>
            <person name="Ram A.F."/>
            <person name="Ren Q."/>
            <person name="Robellet X."/>
            <person name="Robson G."/>
            <person name="Seiboth B."/>
            <person name="van Solingen P."/>
            <person name="Specht T."/>
            <person name="Sun J."/>
            <person name="Taheri-Talesh N."/>
            <person name="Takeshita N."/>
            <person name="Ussery D."/>
            <person name="vanKuyk P.A."/>
            <person name="Visser H."/>
            <person name="van de Vondervoort P.J."/>
            <person name="de Vries R.P."/>
            <person name="Walton J."/>
            <person name="Xiang X."/>
            <person name="Xiong Y."/>
            <person name="Zeng A.P."/>
            <person name="Brandt B.W."/>
            <person name="Cornell M.J."/>
            <person name="van den Hondel C.A."/>
            <person name="Visser J."/>
            <person name="Oliver S.G."/>
            <person name="Turner G."/>
        </authorList>
    </citation>
    <scope>GENOME REANNOTATION</scope>
    <source>
        <strain>FGSC A4 / ATCC 38163 / CBS 112.46 / NRRL 194 / M139</strain>
    </source>
</reference>
<reference key="4">
    <citation type="journal article" date="2013" name="FEBS Lett.">
        <title>Phylogenetic analysis and substrate specificity of GH2 beta-mannosidases from Aspergillus species.</title>
        <authorList>
            <person name="Reddy S.K."/>
            <person name="Rosengren A."/>
            <person name="Klaubauf S."/>
            <person name="Kulkarni T."/>
            <person name="Karlsson E.N."/>
            <person name="de Vries R.P."/>
            <person name="Stalbrand H."/>
        </authorList>
    </citation>
    <scope>FUNCTION</scope>
    <scope>BIOPHYSICOCHEMICAL PROPERTIES</scope>
    <scope>SUBSTRATE SPECIFICITY</scope>
</reference>
<accession>Q5B7W2</accession>
<accession>C8VHQ6</accession>
<accession>Q1HFT6</accession>
<sequence length="843" mass="96367">MGAFTQHVLSEGWSFKDSGDQSPDAWLSVPTVPSVVHQDLQANGKLDDPFIGLNELSARWVNEKSWTYRNVFQKPTVPAGSSIFLVFDGLDTFAKVKLDGQVILESDNMFLAHRVDITKALDVEGEHTLEIDFDCALLRARELRKQHPDHKWVGFNGDTARLSVRKAQYHWGWDWGPVLMTAGIWKEVRLEVYSAKISDLWTEVHLAEDHSKARITAAAEVETQGTGNSYKATFTLSLQGQQIGKEVATLDGNVAKTTFDVQEPSLWWPNGYGDQTLYEISVSLEKEEEQAHQVSKKFGIRTAEVIQRPDKHGKSFFFRINGVDIFCGGACWIPADSLLTNITPDRYRKWIELMAVGHQVMIRVWGGGIYEDESFYQACDEVGVMVWQDFMFGCGNYPTWPEILESIEKEAEYNLRRLRHHPSIVIWVGNNEDYQVQEQQGLTYNYADKDPESWLKTDFPARYIYEHLLPKAVQKIIPSAYYHPGSPWGDGKITSDPTVGDMHQWNVWHGTQEKYQIFDTLGGRFNSEFGMEAFPHMSTIDHFVTNEADKYPQSHVLDFHNKADGHERRIATYLVENLRTATDLEVYIYLTQVVQAETMMFGYRGWRRQWGDERHCGGALLWQLNDCWPTISWAIVDYFLRPKPAFYAVSRVLKPLAIGVRREHHDWSVSHAQPPKTSKYELWVVSSLLKEVIGKVELRFISIKTGLAIHESIVRENVTIVPNGTTNILDGVIDHAVDEPHVLAARLWVDGELVARDVDWPQPFKYLDLSDRGLEITRISKTESEQVLELSARKPVKCLVFEERDNVRVSDSAIDIVPGDEQFVTIKGLKRSDAPLKYKFLGQ</sequence>
<feature type="chain" id="PRO_0000394658" description="Beta-mannosidase B">
    <location>
        <begin position="1"/>
        <end position="843"/>
    </location>
</feature>
<feature type="active site" description="Proton donor" evidence="1">
    <location>
        <position position="432"/>
    </location>
</feature>
<organism>
    <name type="scientific">Emericella nidulans (strain FGSC A4 / ATCC 38163 / CBS 112.46 / NRRL 194 / M139)</name>
    <name type="common">Aspergillus nidulans</name>
    <dbReference type="NCBI Taxonomy" id="227321"/>
    <lineage>
        <taxon>Eukaryota</taxon>
        <taxon>Fungi</taxon>
        <taxon>Dikarya</taxon>
        <taxon>Ascomycota</taxon>
        <taxon>Pezizomycotina</taxon>
        <taxon>Eurotiomycetes</taxon>
        <taxon>Eurotiomycetidae</taxon>
        <taxon>Eurotiales</taxon>
        <taxon>Aspergillaceae</taxon>
        <taxon>Aspergillus</taxon>
        <taxon>Aspergillus subgen. Nidulantes</taxon>
    </lineage>
</organism>
<comment type="function">
    <text evidence="2 3">Exoglycosidase that cleaves the single beta-linked mannose residue from the non-reducing end of beta-mannosidic oligosaccharides of various complexity and length. Prefers mannobiose over mannotriose and has no activity against polymeric mannan. Is also severely restricted by galactosyl substitutions at the +1 subsite. Releases the terminal mannose residue from mannobiose, mannotriose and galactosyl-mannotriose (GM3), but not from galactosyl-mannobiose (GM2) or di-galactosyl-mannopentaose (G2M5).</text>
</comment>
<comment type="catalytic activity">
    <reaction>
        <text>Hydrolysis of terminal, non-reducing beta-D-mannose residues in beta-D-mannosides.</text>
        <dbReference type="EC" id="3.2.1.25"/>
    </reaction>
</comment>
<comment type="biophysicochemical properties">
    <kinetics>
        <KM evidence="3">0.22 mM for p-nitrophenyl-beta-mannopyranoside</KM>
        <text>kcat is 79.2 min(-1) with p-nitrophenyl-beta-mannopyranoside as substrate.</text>
    </kinetics>
    <phDependence>
        <text evidence="3">Optimum pH is 6. Active from pH 5 to 8.</text>
    </phDependence>
    <temperatureDependence>
        <text evidence="3">Optimum temperature is 37 degrees Celsius (at pH 6).</text>
    </temperatureDependence>
</comment>
<comment type="pathway">
    <text>Glycan metabolism; N-glycan degradation.</text>
</comment>
<comment type="miscellaneous">
    <text evidence="5">In contrast to clade A beta-mannosidases, which are likely secreted, clade B proteins appear to be intracellular.</text>
</comment>
<comment type="similarity">
    <text evidence="4">Belongs to the glycosyl hydrolase 2 family. Beta-mannosidase B subfamily.</text>
</comment>
<comment type="sequence caution" evidence="4">
    <conflict type="erroneous gene model prediction">
        <sequence resource="EMBL-CDS" id="CBF82847"/>
    </conflict>
</comment>
<comment type="sequence caution" evidence="4">
    <conflict type="erroneous gene model prediction">
        <sequence resource="EMBL-CDS" id="EAA63336"/>
    </conflict>
</comment>
<proteinExistence type="evidence at protein level"/>
<gene>
    <name type="primary">mndB</name>
    <name type="ORF">AN3368</name>
</gene>
<name>MANBB_EMENI</name>
<evidence type="ECO:0000250" key="1"/>
<evidence type="ECO:0000269" key="2">
    <source>
    </source>
</evidence>
<evidence type="ECO:0000269" key="3">
    <source>
    </source>
</evidence>
<evidence type="ECO:0000305" key="4"/>
<evidence type="ECO:0000305" key="5">
    <source>
    </source>
</evidence>
<protein>
    <recommendedName>
        <fullName>Beta-mannosidase B</fullName>
        <ecNumber>3.2.1.25</ecNumber>
    </recommendedName>
    <alternativeName>
        <fullName>Mannanase B</fullName>
        <shortName>Mannase B</shortName>
    </alternativeName>
</protein>
<keyword id="KW-0119">Carbohydrate metabolism</keyword>
<keyword id="KW-0326">Glycosidase</keyword>
<keyword id="KW-0378">Hydrolase</keyword>
<keyword id="KW-0624">Polysaccharide degradation</keyword>
<keyword id="KW-1185">Reference proteome</keyword>